<keyword id="KW-0007">Acetylation</keyword>
<keyword id="KW-0024">Alternative initiation</keyword>
<keyword id="KW-0963">Cytoplasm</keyword>
<keyword id="KW-0210">Decarboxylase</keyword>
<keyword id="KW-1015">Disulfide bond</keyword>
<keyword id="KW-0275">Fatty acid biosynthesis</keyword>
<keyword id="KW-0276">Fatty acid metabolism</keyword>
<keyword id="KW-0444">Lipid biosynthesis</keyword>
<keyword id="KW-0443">Lipid metabolism</keyword>
<keyword id="KW-0456">Lyase</keyword>
<keyword id="KW-0496">Mitochondrion</keyword>
<keyword id="KW-0576">Peroxisome</keyword>
<keyword id="KW-1185">Reference proteome</keyword>
<keyword id="KW-0809">Transit peptide</keyword>
<sequence>MRGLGPGLRARRLLPLRSPPRPPGPRGRRLCGGLAASAMDELLRRAVPPTPAYELREKTPAPAEGQCADFVSFYGGLAEASQRAELLGRLAQGFGVDHGQVAEQSAGVLQLRQQAREAAVLLQAEDRLRYALVPRYRGLFHHISKLDGGVRFLVQLRADLLEAQALKLVEGPHVREMNGVLKSMLSEWFSSGFLNLERVTWHSPCEVLQKISECEAVHPVKNWMDMKRRVGPYRRCYFFSHCSTPGEPLVVLHVALTGDISNNIQGIVKECPPTETEERNRIAAAIFYSISLTQQGLQGVELGTFLIKRVVKELQKEFPQLGAFSSLSPIPGFTKWLLGLLNVQGKEHGRNELFTDSECQEISAVTGNPVHESLKGFLSSGEWVKSEKLTQALQGPLMRLCAWYLYGEKHRGYALNPVANFHLQNGAVMWRINWMADSSLKGLTSSCGLMVNYRYYLEETGPNSISYLGSKNIKASEQILSLVAQFQNNSKL</sequence>
<dbReference type="EC" id="4.1.1.9" evidence="6"/>
<dbReference type="EMBL" id="AK082479">
    <property type="protein sequence ID" value="BAC38505.1"/>
    <property type="molecule type" value="mRNA"/>
</dbReference>
<dbReference type="EMBL" id="BC004764">
    <property type="protein sequence ID" value="AAH04764.1"/>
    <property type="molecule type" value="mRNA"/>
</dbReference>
<dbReference type="EMBL" id="AY331094">
    <property type="protein sequence ID" value="AAP93335.2"/>
    <property type="molecule type" value="Genomic_DNA"/>
</dbReference>
<dbReference type="CCDS" id="CCDS22703.1">
    <molecule id="Q99J39-1"/>
</dbReference>
<dbReference type="RefSeq" id="NP_064350.2">
    <molecule id="Q99J39-1"/>
    <property type="nucleotide sequence ID" value="NM_019966.3"/>
</dbReference>
<dbReference type="SMR" id="Q99J39"/>
<dbReference type="BioGRID" id="208121">
    <property type="interactions" value="1"/>
</dbReference>
<dbReference type="FunCoup" id="Q99J39">
    <property type="interactions" value="1364"/>
</dbReference>
<dbReference type="IntAct" id="Q99J39">
    <property type="interactions" value="1"/>
</dbReference>
<dbReference type="STRING" id="10090.ENSMUSP00000095970"/>
<dbReference type="BindingDB" id="Q99J39"/>
<dbReference type="ChEMBL" id="CHEMBL1255162"/>
<dbReference type="GlyGen" id="Q99J39">
    <property type="glycosylation" value="2 sites, 1 O-linked glycan (1 site)"/>
</dbReference>
<dbReference type="iPTMnet" id="Q99J39"/>
<dbReference type="PhosphoSitePlus" id="Q99J39"/>
<dbReference type="SwissPalm" id="Q99J39"/>
<dbReference type="jPOST" id="Q99J39"/>
<dbReference type="PaxDb" id="10090-ENSMUSP00000095970"/>
<dbReference type="PeptideAtlas" id="Q99J39"/>
<dbReference type="ProteomicsDB" id="279501">
    <molecule id="Q99J39-1"/>
</dbReference>
<dbReference type="ProteomicsDB" id="279502">
    <molecule id="Q99J39-2"/>
</dbReference>
<dbReference type="Pumba" id="Q99J39"/>
<dbReference type="Antibodypedia" id="30519">
    <property type="antibodies" value="108 antibodies from 23 providers"/>
</dbReference>
<dbReference type="DNASU" id="56690"/>
<dbReference type="Ensembl" id="ENSMUST00000098367.5">
    <molecule id="Q99J39-1"/>
    <property type="protein sequence ID" value="ENSMUSP00000095970.5"/>
    <property type="gene ID" value="ENSMUSG00000074064.7"/>
</dbReference>
<dbReference type="GeneID" id="56690"/>
<dbReference type="KEGG" id="mmu:56690"/>
<dbReference type="UCSC" id="uc009npn.1">
    <molecule id="Q99J39-1"/>
    <property type="organism name" value="mouse"/>
</dbReference>
<dbReference type="AGR" id="MGI:1928485"/>
<dbReference type="CTD" id="23417"/>
<dbReference type="MGI" id="MGI:1928485">
    <property type="gene designation" value="Mlycd"/>
</dbReference>
<dbReference type="VEuPathDB" id="HostDB:ENSMUSG00000074064"/>
<dbReference type="eggNOG" id="KOG3018">
    <property type="taxonomic scope" value="Eukaryota"/>
</dbReference>
<dbReference type="GeneTree" id="ENSGT00390000005410"/>
<dbReference type="HOGENOM" id="CLU_023433_0_0_1"/>
<dbReference type="InParanoid" id="Q99J39"/>
<dbReference type="OMA" id="PIDWSTP"/>
<dbReference type="OrthoDB" id="426718at2759"/>
<dbReference type="PhylomeDB" id="Q99J39"/>
<dbReference type="TreeFam" id="TF312959"/>
<dbReference type="BRENDA" id="4.1.1.9">
    <property type="organism ID" value="3474"/>
</dbReference>
<dbReference type="Reactome" id="R-MMU-390247">
    <property type="pathway name" value="Beta-oxidation of very long chain fatty acids"/>
</dbReference>
<dbReference type="Reactome" id="R-MMU-9033241">
    <property type="pathway name" value="Peroxisomal protein import"/>
</dbReference>
<dbReference type="UniPathway" id="UPA00340">
    <property type="reaction ID" value="UER00710"/>
</dbReference>
<dbReference type="BioGRID-ORCS" id="56690">
    <property type="hits" value="2 hits in 80 CRISPR screens"/>
</dbReference>
<dbReference type="ChiTaRS" id="Mlycd">
    <property type="organism name" value="mouse"/>
</dbReference>
<dbReference type="PRO" id="PR:Q99J39"/>
<dbReference type="Proteomes" id="UP000000589">
    <property type="component" value="Chromosome 8"/>
</dbReference>
<dbReference type="RNAct" id="Q99J39">
    <property type="molecule type" value="protein"/>
</dbReference>
<dbReference type="Bgee" id="ENSMUSG00000074064">
    <property type="expression patterns" value="Expressed in hindlimb stylopod muscle and 211 other cell types or tissues"/>
</dbReference>
<dbReference type="GO" id="GO:0005737">
    <property type="term" value="C:cytoplasm"/>
    <property type="evidence" value="ECO:0000314"/>
    <property type="project" value="MGI"/>
</dbReference>
<dbReference type="GO" id="GO:0005759">
    <property type="term" value="C:mitochondrial matrix"/>
    <property type="evidence" value="ECO:0000314"/>
    <property type="project" value="UniProtKB"/>
</dbReference>
<dbReference type="GO" id="GO:0005739">
    <property type="term" value="C:mitochondrion"/>
    <property type="evidence" value="ECO:0000314"/>
    <property type="project" value="MGI"/>
</dbReference>
<dbReference type="GO" id="GO:0005782">
    <property type="term" value="C:peroxisomal matrix"/>
    <property type="evidence" value="ECO:0000250"/>
    <property type="project" value="UniProtKB"/>
</dbReference>
<dbReference type="GO" id="GO:0005777">
    <property type="term" value="C:peroxisome"/>
    <property type="evidence" value="ECO:0000250"/>
    <property type="project" value="UniProtKB"/>
</dbReference>
<dbReference type="GO" id="GO:0042802">
    <property type="term" value="F:identical protein binding"/>
    <property type="evidence" value="ECO:0007669"/>
    <property type="project" value="Ensembl"/>
</dbReference>
<dbReference type="GO" id="GO:0050080">
    <property type="term" value="F:malonyl-CoA decarboxylase activity"/>
    <property type="evidence" value="ECO:0000314"/>
    <property type="project" value="UniProtKB"/>
</dbReference>
<dbReference type="GO" id="GO:0006085">
    <property type="term" value="P:acetyl-CoA biosynthetic process"/>
    <property type="evidence" value="ECO:0000250"/>
    <property type="project" value="UniProtKB"/>
</dbReference>
<dbReference type="GO" id="GO:0006633">
    <property type="term" value="P:fatty acid biosynthetic process"/>
    <property type="evidence" value="ECO:0000250"/>
    <property type="project" value="UniProtKB"/>
</dbReference>
<dbReference type="GO" id="GO:0019395">
    <property type="term" value="P:fatty acid oxidation"/>
    <property type="evidence" value="ECO:0007669"/>
    <property type="project" value="Ensembl"/>
</dbReference>
<dbReference type="GO" id="GO:2001294">
    <property type="term" value="P:malonyl-CoA catabolic process"/>
    <property type="evidence" value="ECO:0000314"/>
    <property type="project" value="UniProtKB"/>
</dbReference>
<dbReference type="GO" id="GO:0046321">
    <property type="term" value="P:positive regulation of fatty acid oxidation"/>
    <property type="evidence" value="ECO:0000314"/>
    <property type="project" value="UniProtKB"/>
</dbReference>
<dbReference type="GO" id="GO:0031998">
    <property type="term" value="P:regulation of fatty acid beta-oxidation"/>
    <property type="evidence" value="ECO:0007669"/>
    <property type="project" value="Ensembl"/>
</dbReference>
<dbReference type="GO" id="GO:0010906">
    <property type="term" value="P:regulation of glucose metabolic process"/>
    <property type="evidence" value="ECO:0000250"/>
    <property type="project" value="UniProtKB"/>
</dbReference>
<dbReference type="GO" id="GO:0002931">
    <property type="term" value="P:response to ischemia"/>
    <property type="evidence" value="ECO:0000250"/>
    <property type="project" value="UniProtKB"/>
</dbReference>
<dbReference type="GO" id="GO:0007584">
    <property type="term" value="P:response to nutrient"/>
    <property type="evidence" value="ECO:0007669"/>
    <property type="project" value="Ensembl"/>
</dbReference>
<dbReference type="FunFam" id="1.20.140.90:FF:000001">
    <property type="entry name" value="Malonyl-CoA decarboxylase, mitochondrial"/>
    <property type="match status" value="1"/>
</dbReference>
<dbReference type="FunFam" id="3.40.630.150:FF:000001">
    <property type="entry name" value="Malonyl-CoA decarboxylase, mitochondrial"/>
    <property type="match status" value="1"/>
</dbReference>
<dbReference type="Gene3D" id="3.40.630.150">
    <property type="entry name" value="Malonyl-CoA decarboxylase, catalytic domain"/>
    <property type="match status" value="1"/>
</dbReference>
<dbReference type="Gene3D" id="1.20.140.90">
    <property type="entry name" value="Malonyl-CoA decarboxylase, oligemerization domain"/>
    <property type="match status" value="1"/>
</dbReference>
<dbReference type="InterPro" id="IPR038917">
    <property type="entry name" value="Malonyl_CoA_deC"/>
</dbReference>
<dbReference type="InterPro" id="IPR007956">
    <property type="entry name" value="Malonyl_CoA_deC_C"/>
</dbReference>
<dbReference type="InterPro" id="IPR042303">
    <property type="entry name" value="Malonyl_CoA_deC_C_sf"/>
</dbReference>
<dbReference type="InterPro" id="IPR035372">
    <property type="entry name" value="MCD_N"/>
</dbReference>
<dbReference type="InterPro" id="IPR038351">
    <property type="entry name" value="MCD_N_sf"/>
</dbReference>
<dbReference type="PANTHER" id="PTHR28641">
    <property type="match status" value="1"/>
</dbReference>
<dbReference type="PANTHER" id="PTHR28641:SF1">
    <property type="entry name" value="MALONYL-COA DECARBOXYLASE, MITOCHONDRIAL"/>
    <property type="match status" value="1"/>
</dbReference>
<dbReference type="Pfam" id="PF05292">
    <property type="entry name" value="MCD"/>
    <property type="match status" value="1"/>
</dbReference>
<dbReference type="Pfam" id="PF17408">
    <property type="entry name" value="MCD_N"/>
    <property type="match status" value="1"/>
</dbReference>
<name>DCMC_MOUSE</name>
<protein>
    <recommendedName>
        <fullName evidence="8">Malonyl-CoA decarboxylase, mitochondrial</fullName>
        <shortName>MCD</shortName>
        <ecNumber evidence="6">4.1.1.9</ecNumber>
    </recommendedName>
</protein>
<gene>
    <name evidence="9" type="primary">Mlycd</name>
</gene>
<feature type="transit peptide" description="Mitochondrion" evidence="4">
    <location>
        <begin position="1"/>
        <end position="38"/>
    </location>
</feature>
<feature type="chain" id="PRO_0000021090" description="Malonyl-CoA decarboxylase, mitochondrial">
    <location>
        <begin position="39"/>
        <end position="492"/>
    </location>
</feature>
<feature type="region of interest" description="Disordered" evidence="5">
    <location>
        <begin position="1"/>
        <end position="28"/>
    </location>
</feature>
<feature type="region of interest" description="Alpha-helical domain" evidence="1">
    <location>
        <begin position="39"/>
        <end position="189"/>
    </location>
</feature>
<feature type="region of interest" description="Catalytic domain" evidence="1">
    <location>
        <begin position="190"/>
        <end position="492"/>
    </location>
</feature>
<feature type="short sequence motif" description="Microbody targeting signal" evidence="4">
    <location>
        <begin position="490"/>
        <end position="492"/>
    </location>
</feature>
<feature type="active site" description="Proton acceptor" evidence="1">
    <location>
        <position position="328"/>
    </location>
</feature>
<feature type="active site" description="Proton donor" evidence="1">
    <location>
        <position position="422"/>
    </location>
</feature>
<feature type="binding site" evidence="1">
    <location>
        <begin position="298"/>
        <end position="304"/>
    </location>
    <ligand>
        <name>malonyl-CoA</name>
        <dbReference type="ChEBI" id="CHEBI:57384"/>
    </ligand>
</feature>
<feature type="binding site" evidence="1">
    <location>
        <position position="328"/>
    </location>
    <ligand>
        <name>malonyl-CoA</name>
        <dbReference type="ChEBI" id="CHEBI:57384"/>
    </ligand>
</feature>
<feature type="binding site" evidence="1">
    <location>
        <position position="422"/>
    </location>
    <ligand>
        <name>malonyl-CoA</name>
        <dbReference type="ChEBI" id="CHEBI:57384"/>
    </ligand>
</feature>
<feature type="site" description="Essential for catalytic activity" evidence="1">
    <location>
        <position position="210"/>
    </location>
</feature>
<feature type="modified residue" description="N6-acetyllysine" evidence="7">
    <location>
        <position position="58"/>
    </location>
</feature>
<feature type="modified residue" description="N6-acetyllysine; alternate" evidence="7">
    <location>
        <position position="167"/>
    </location>
</feature>
<feature type="modified residue" description="N6-succinyllysine; alternate" evidence="11">
    <location>
        <position position="167"/>
    </location>
</feature>
<feature type="modified residue" description="N6-acetyllysine" evidence="7">
    <location>
        <position position="210"/>
    </location>
</feature>
<feature type="modified residue" description="N6-succinyllysine" evidence="11">
    <location>
        <position position="221"/>
    </location>
</feature>
<feature type="modified residue" description="N6-acetyllysine" evidence="7">
    <location>
        <position position="316"/>
    </location>
</feature>
<feature type="modified residue" description="N6-acetyllysine; alternate" evidence="10">
    <location>
        <position position="385"/>
    </location>
</feature>
<feature type="modified residue" description="N6-succinyllysine; alternate" evidence="11">
    <location>
        <position position="385"/>
    </location>
</feature>
<feature type="modified residue" description="N6-acetyllysine" evidence="7">
    <location>
        <position position="388"/>
    </location>
</feature>
<feature type="modified residue" description="N6-acetyllysine" evidence="7">
    <location>
        <position position="441"/>
    </location>
</feature>
<feature type="modified residue" description="N6-acetyllysine" evidence="7">
    <location>
        <position position="471"/>
    </location>
</feature>
<feature type="disulfide bond" description="Interchain" evidence="4">
    <location>
        <position position="205"/>
    </location>
</feature>
<feature type="splice variant" id="VSP_018817" description="In isoform Cytoplasmic+peroxisomal." evidence="8">
    <location>
        <begin position="1"/>
        <end position="38"/>
    </location>
</feature>
<feature type="mutagenesis site" description="Mimicks constitutive acetylation, leading to increased malonyl-CoA decarboxylase activity." evidence="7">
    <original>K</original>
    <variation>Q</variation>
    <location>
        <position position="471"/>
    </location>
</feature>
<feature type="mutagenesis site" description="Decreased acetylation, leading to reduced malonyl-CoA decarboxylase activity." evidence="7">
    <original>K</original>
    <variation>R</variation>
    <location>
        <position position="471"/>
    </location>
</feature>
<reference key="1">
    <citation type="journal article" date="2005" name="Science">
        <title>The transcriptional landscape of the mammalian genome.</title>
        <authorList>
            <person name="Carninci P."/>
            <person name="Kasukawa T."/>
            <person name="Katayama S."/>
            <person name="Gough J."/>
            <person name="Frith M.C."/>
            <person name="Maeda N."/>
            <person name="Oyama R."/>
            <person name="Ravasi T."/>
            <person name="Lenhard B."/>
            <person name="Wells C."/>
            <person name="Kodzius R."/>
            <person name="Shimokawa K."/>
            <person name="Bajic V.B."/>
            <person name="Brenner S.E."/>
            <person name="Batalov S."/>
            <person name="Forrest A.R."/>
            <person name="Zavolan M."/>
            <person name="Davis M.J."/>
            <person name="Wilming L.G."/>
            <person name="Aidinis V."/>
            <person name="Allen J.E."/>
            <person name="Ambesi-Impiombato A."/>
            <person name="Apweiler R."/>
            <person name="Aturaliya R.N."/>
            <person name="Bailey T.L."/>
            <person name="Bansal M."/>
            <person name="Baxter L."/>
            <person name="Beisel K.W."/>
            <person name="Bersano T."/>
            <person name="Bono H."/>
            <person name="Chalk A.M."/>
            <person name="Chiu K.P."/>
            <person name="Choudhary V."/>
            <person name="Christoffels A."/>
            <person name="Clutterbuck D.R."/>
            <person name="Crowe M.L."/>
            <person name="Dalla E."/>
            <person name="Dalrymple B.P."/>
            <person name="de Bono B."/>
            <person name="Della Gatta G."/>
            <person name="di Bernardo D."/>
            <person name="Down T."/>
            <person name="Engstrom P."/>
            <person name="Fagiolini M."/>
            <person name="Faulkner G."/>
            <person name="Fletcher C.F."/>
            <person name="Fukushima T."/>
            <person name="Furuno M."/>
            <person name="Futaki S."/>
            <person name="Gariboldi M."/>
            <person name="Georgii-Hemming P."/>
            <person name="Gingeras T.R."/>
            <person name="Gojobori T."/>
            <person name="Green R.E."/>
            <person name="Gustincich S."/>
            <person name="Harbers M."/>
            <person name="Hayashi Y."/>
            <person name="Hensch T.K."/>
            <person name="Hirokawa N."/>
            <person name="Hill D."/>
            <person name="Huminiecki L."/>
            <person name="Iacono M."/>
            <person name="Ikeo K."/>
            <person name="Iwama A."/>
            <person name="Ishikawa T."/>
            <person name="Jakt M."/>
            <person name="Kanapin A."/>
            <person name="Katoh M."/>
            <person name="Kawasawa Y."/>
            <person name="Kelso J."/>
            <person name="Kitamura H."/>
            <person name="Kitano H."/>
            <person name="Kollias G."/>
            <person name="Krishnan S.P."/>
            <person name="Kruger A."/>
            <person name="Kummerfeld S.K."/>
            <person name="Kurochkin I.V."/>
            <person name="Lareau L.F."/>
            <person name="Lazarevic D."/>
            <person name="Lipovich L."/>
            <person name="Liu J."/>
            <person name="Liuni S."/>
            <person name="McWilliam S."/>
            <person name="Madan Babu M."/>
            <person name="Madera M."/>
            <person name="Marchionni L."/>
            <person name="Matsuda H."/>
            <person name="Matsuzawa S."/>
            <person name="Miki H."/>
            <person name="Mignone F."/>
            <person name="Miyake S."/>
            <person name="Morris K."/>
            <person name="Mottagui-Tabar S."/>
            <person name="Mulder N."/>
            <person name="Nakano N."/>
            <person name="Nakauchi H."/>
            <person name="Ng P."/>
            <person name="Nilsson R."/>
            <person name="Nishiguchi S."/>
            <person name="Nishikawa S."/>
            <person name="Nori F."/>
            <person name="Ohara O."/>
            <person name="Okazaki Y."/>
            <person name="Orlando V."/>
            <person name="Pang K.C."/>
            <person name="Pavan W.J."/>
            <person name="Pavesi G."/>
            <person name="Pesole G."/>
            <person name="Petrovsky N."/>
            <person name="Piazza S."/>
            <person name="Reed J."/>
            <person name="Reid J.F."/>
            <person name="Ring B.Z."/>
            <person name="Ringwald M."/>
            <person name="Rost B."/>
            <person name="Ruan Y."/>
            <person name="Salzberg S.L."/>
            <person name="Sandelin A."/>
            <person name="Schneider C."/>
            <person name="Schoenbach C."/>
            <person name="Sekiguchi K."/>
            <person name="Semple C.A."/>
            <person name="Seno S."/>
            <person name="Sessa L."/>
            <person name="Sheng Y."/>
            <person name="Shibata Y."/>
            <person name="Shimada H."/>
            <person name="Shimada K."/>
            <person name="Silva D."/>
            <person name="Sinclair B."/>
            <person name="Sperling S."/>
            <person name="Stupka E."/>
            <person name="Sugiura K."/>
            <person name="Sultana R."/>
            <person name="Takenaka Y."/>
            <person name="Taki K."/>
            <person name="Tammoja K."/>
            <person name="Tan S.L."/>
            <person name="Tang S."/>
            <person name="Taylor M.S."/>
            <person name="Tegner J."/>
            <person name="Teichmann S.A."/>
            <person name="Ueda H.R."/>
            <person name="van Nimwegen E."/>
            <person name="Verardo R."/>
            <person name="Wei C.L."/>
            <person name="Yagi K."/>
            <person name="Yamanishi H."/>
            <person name="Zabarovsky E."/>
            <person name="Zhu S."/>
            <person name="Zimmer A."/>
            <person name="Hide W."/>
            <person name="Bult C."/>
            <person name="Grimmond S.M."/>
            <person name="Teasdale R.D."/>
            <person name="Liu E.T."/>
            <person name="Brusic V."/>
            <person name="Quackenbush J."/>
            <person name="Wahlestedt C."/>
            <person name="Mattick J.S."/>
            <person name="Hume D.A."/>
            <person name="Kai C."/>
            <person name="Sasaki D."/>
            <person name="Tomaru Y."/>
            <person name="Fukuda S."/>
            <person name="Kanamori-Katayama M."/>
            <person name="Suzuki M."/>
            <person name="Aoki J."/>
            <person name="Arakawa T."/>
            <person name="Iida J."/>
            <person name="Imamura K."/>
            <person name="Itoh M."/>
            <person name="Kato T."/>
            <person name="Kawaji H."/>
            <person name="Kawagashira N."/>
            <person name="Kawashima T."/>
            <person name="Kojima M."/>
            <person name="Kondo S."/>
            <person name="Konno H."/>
            <person name="Nakano K."/>
            <person name="Ninomiya N."/>
            <person name="Nishio T."/>
            <person name="Okada M."/>
            <person name="Plessy C."/>
            <person name="Shibata K."/>
            <person name="Shiraki T."/>
            <person name="Suzuki S."/>
            <person name="Tagami M."/>
            <person name="Waki K."/>
            <person name="Watahiki A."/>
            <person name="Okamura-Oho Y."/>
            <person name="Suzuki H."/>
            <person name="Kawai J."/>
            <person name="Hayashizaki Y."/>
        </authorList>
    </citation>
    <scope>NUCLEOTIDE SEQUENCE [LARGE SCALE MRNA]</scope>
    <source>
        <strain>C57BL/6J</strain>
        <tissue>Cerebellum</tissue>
    </source>
</reference>
<reference key="2">
    <citation type="journal article" date="2004" name="Genome Res.">
        <title>The status, quality, and expansion of the NIH full-length cDNA project: the Mammalian Gene Collection (MGC).</title>
        <authorList>
            <consortium name="The MGC Project Team"/>
        </authorList>
    </citation>
    <scope>NUCLEOTIDE SEQUENCE [LARGE SCALE MRNA]</scope>
    <source>
        <strain>129</strain>
        <strain>C57BL/6J</strain>
        <strain>FVB/N</strain>
        <tissue>Mammary tumor</tissue>
    </source>
</reference>
<reference key="3">
    <citation type="submission" date="2003-07" db="EMBL/GenBank/DDBJ databases">
        <title>Mouse malonyl-CoA decarboxylase: genome structure, cDNA cloning, expression and promoter study.</title>
        <authorList>
            <person name="Kim N.H."/>
            <person name="Lee G.Y."/>
            <person name="Kim Y.S."/>
        </authorList>
    </citation>
    <scope>NUCLEOTIDE SEQUENCE [GENOMIC DNA] OF 1-175</scope>
    <source>
        <strain>129S6/SvEvTac</strain>
    </source>
</reference>
<reference key="4">
    <citation type="journal article" date="2006" name="Circulation">
        <title>Absence of malonyl coenzyme A decarboxylase in mice increases cardiac glucose oxidation and protects the heart from ischemic injury.</title>
        <authorList>
            <person name="Dyck J.R."/>
            <person name="Hopkins T.A."/>
            <person name="Bonnet S."/>
            <person name="Michelakis E.D."/>
            <person name="Young M.E."/>
            <person name="Watanabe M."/>
            <person name="Kawase Y."/>
            <person name="Jishage K."/>
            <person name="Lopaschuk G.D."/>
        </authorList>
    </citation>
    <scope>FUNCTION</scope>
    <scope>CATALYTIC ACTIVITY</scope>
    <scope>DISRUPTION PHENOTYPE</scope>
</reference>
<reference key="5">
    <citation type="journal article" date="2010" name="Cell">
        <title>A tissue-specific atlas of mouse protein phosphorylation and expression.</title>
        <authorList>
            <person name="Huttlin E.L."/>
            <person name="Jedrychowski M.P."/>
            <person name="Elias J.E."/>
            <person name="Goswami T."/>
            <person name="Rad R."/>
            <person name="Beausoleil S.A."/>
            <person name="Villen J."/>
            <person name="Haas W."/>
            <person name="Sowa M.E."/>
            <person name="Gygi S.P."/>
        </authorList>
    </citation>
    <scope>IDENTIFICATION BY MASS SPECTROMETRY [LARGE SCALE ANALYSIS]</scope>
    <source>
        <tissue>Brown adipose tissue</tissue>
        <tissue>Heart</tissue>
        <tissue>Kidney</tissue>
        <tissue>Liver</tissue>
        <tissue>Lung</tissue>
        <tissue>Pancreas</tissue>
        <tissue>Spleen</tissue>
        <tissue>Testis</tissue>
    </source>
</reference>
<reference key="6">
    <citation type="journal article" date="2013" name="Mol. Cell">
        <title>SIRT4 coordinates the balance between lipid synthesis and catabolism by repressing malonyl CoA decarboxylase.</title>
        <authorList>
            <person name="Laurent G."/>
            <person name="German N.J."/>
            <person name="Saha A.K."/>
            <person name="de Boer V.C."/>
            <person name="Davies M."/>
            <person name="Koves T.R."/>
            <person name="Dephoure N."/>
            <person name="Fischer F."/>
            <person name="Boanca G."/>
            <person name="Vaitheesvaran B."/>
            <person name="Lovitch S.B."/>
            <person name="Sharpe A.H."/>
            <person name="Kurland I.J."/>
            <person name="Steegborn C."/>
            <person name="Gygi S.P."/>
            <person name="Muoio D.M."/>
            <person name="Ruderman N.B."/>
            <person name="Haigis M.C."/>
        </authorList>
    </citation>
    <scope>FUNCTION</scope>
    <scope>SUBCELLULAR LOCATION</scope>
    <scope>ACETYLATION AT LYS-58; LYS-167; LYS-210; LYS-316; LYS-388; LYS-441 AND LYS-471</scope>
    <scope>MUTAGENESIS OF LYS-471</scope>
</reference>
<reference key="7">
    <citation type="journal article" date="2013" name="Mol. Cell">
        <title>SIRT5-mediated lysine desuccinylation impacts diverse metabolic pathways.</title>
        <authorList>
            <person name="Park J."/>
            <person name="Chen Y."/>
            <person name="Tishkoff D.X."/>
            <person name="Peng C."/>
            <person name="Tan M."/>
            <person name="Dai L."/>
            <person name="Xie Z."/>
            <person name="Zhang Y."/>
            <person name="Zwaans B.M."/>
            <person name="Skinner M.E."/>
            <person name="Lombard D.B."/>
            <person name="Zhao Y."/>
        </authorList>
    </citation>
    <scope>SUCCINYLATION [LARGE SCALE ANALYSIS] AT LYS-167; LYS-221 AND LYS-385</scope>
    <scope>IDENTIFICATION BY MASS SPECTROMETRY [LARGE SCALE ANALYSIS]</scope>
    <source>
        <tissue>Liver</tissue>
    </source>
</reference>
<reference key="8">
    <citation type="journal article" date="2013" name="Proc. Natl. Acad. Sci. U.S.A.">
        <title>Label-free quantitative proteomics of the lysine acetylome in mitochondria identifies substrates of SIRT3 in metabolic pathways.</title>
        <authorList>
            <person name="Rardin M.J."/>
            <person name="Newman J.C."/>
            <person name="Held J.M."/>
            <person name="Cusack M.P."/>
            <person name="Sorensen D.J."/>
            <person name="Li B."/>
            <person name="Schilling B."/>
            <person name="Mooney S.D."/>
            <person name="Kahn C.R."/>
            <person name="Verdin E."/>
            <person name="Gibson B.W."/>
        </authorList>
    </citation>
    <scope>ACETYLATION [LARGE SCALE ANALYSIS] AT LYS-385</scope>
    <scope>IDENTIFICATION BY MASS SPECTROMETRY [LARGE SCALE ANALYSIS]</scope>
    <source>
        <tissue>Liver</tissue>
    </source>
</reference>
<comment type="function">
    <text evidence="6 7">Catalyzes the conversion of malonyl-CoA to acetyl-CoA. In the fatty acid biosynthesis MCD selectively removes malonyl-CoA and thus assures that methyl-malonyl-CoA is the only chain elongating substrate for fatty acid synthase and that fatty acids with multiple methyl side chains are produced. In peroxisomes it may be involved in degrading intraperoxisomal malonyl-CoA, which is generated by the peroxisomal beta-oxidation of odd chain-length dicarboxylic fatty acids. Plays a role in the metabolic balance between glucose and lipid oxidation in muscle independent of alterations in insulin signaling. Plays a role in controlling the extent of ischemic injury by promoting glucose oxidation.</text>
</comment>
<comment type="catalytic activity">
    <reaction evidence="6">
        <text>malonyl-CoA + H(+) = acetyl-CoA + CO2</text>
        <dbReference type="Rhea" id="RHEA:18781"/>
        <dbReference type="ChEBI" id="CHEBI:15378"/>
        <dbReference type="ChEBI" id="CHEBI:16526"/>
        <dbReference type="ChEBI" id="CHEBI:57288"/>
        <dbReference type="ChEBI" id="CHEBI:57384"/>
        <dbReference type="EC" id="4.1.1.9"/>
    </reaction>
    <physiologicalReaction direction="left-to-right" evidence="8">
        <dbReference type="Rhea" id="RHEA:18782"/>
    </physiologicalReaction>
</comment>
<comment type="activity regulation">
    <text evidence="2">Malonyl-CoA decarboxylase activity does not require any cofactors or divalent metal ions.</text>
</comment>
<comment type="pathway">
    <text>Metabolic intermediate biosynthesis; acetyl-CoA biosynthesis; acetyl-CoA from malonyl-CoA: step 1/1.</text>
</comment>
<comment type="subunit">
    <text evidence="2">Homotetramer. Dimer of dimers. The two subunits within a dimer display conformational differences suggesting that at any given moment, only one of the two subunits is competent for malonyl-CoA binding and catalytic activity. Under oxidizing conditions, can form disulfide-linked homotetramers (in vitro). Associates with the peroxisomal targeting signal receptor PEX5 (By similarity).</text>
</comment>
<comment type="subcellular location">
    <subcellularLocation>
        <location evidence="2">Cytoplasm</location>
    </subcellularLocation>
    <subcellularLocation>
        <location evidence="7">Mitochondrion matrix</location>
    </subcellularLocation>
    <subcellularLocation>
        <location evidence="2">Peroxisome</location>
    </subcellularLocation>
    <subcellularLocation>
        <location evidence="3">Peroxisome matrix</location>
    </subcellularLocation>
    <text evidence="3">Enzymatically active in all three subcellular compartments.</text>
</comment>
<comment type="alternative products">
    <event type="alternative initiation"/>
    <isoform>
        <id>Q99J39-1</id>
        <name>Mitochondrial</name>
        <sequence type="displayed"/>
    </isoform>
    <isoform>
        <id>Q99J39-2</id>
        <name>Cytoplasmic+peroxisomal</name>
        <sequence type="described" ref="VSP_018817"/>
    </isoform>
    <text>A single transcription start site has been demonstrated in Rat.</text>
</comment>
<comment type="PTM">
    <text evidence="8">Interchain disulfide bonds may form in peroxisomes (Potential). Interchain disulfide bonds are not expected to form in the reducing environment of the cytoplasm and mitochondria.</text>
</comment>
<comment type="PTM">
    <text evidence="7">Acetylation at Lys-471 activates malonyl-CoA decarboxylase activity. Deacetylation at Lys-471 by SIRT4 represses activity, leading to promote lipogenesis.</text>
</comment>
<comment type="disruption phenotype">
    <text evidence="6">Mice show an increased expression of genes regulating fatty acid utilization and likely contributes to the absence of changes in energy metabolism in the aerobic heart. Display a preference for glucose utilization after ischemia and improve functional recovery of the heart.</text>
</comment>
<comment type="miscellaneous">
    <molecule>Isoform Cytoplasmic+peroxisomal</molecule>
    <text evidence="8">May be produced by alternative initiation at Met-39 of isoform mitochondrial. Alternatively, represents a proteolytic processed form of the mitochondrial form.</text>
</comment>
<proteinExistence type="evidence at protein level"/>
<organism>
    <name type="scientific">Mus musculus</name>
    <name type="common">Mouse</name>
    <dbReference type="NCBI Taxonomy" id="10090"/>
    <lineage>
        <taxon>Eukaryota</taxon>
        <taxon>Metazoa</taxon>
        <taxon>Chordata</taxon>
        <taxon>Craniata</taxon>
        <taxon>Vertebrata</taxon>
        <taxon>Euteleostomi</taxon>
        <taxon>Mammalia</taxon>
        <taxon>Eutheria</taxon>
        <taxon>Euarchontoglires</taxon>
        <taxon>Glires</taxon>
        <taxon>Rodentia</taxon>
        <taxon>Myomorpha</taxon>
        <taxon>Muroidea</taxon>
        <taxon>Muridae</taxon>
        <taxon>Murinae</taxon>
        <taxon>Mus</taxon>
        <taxon>Mus</taxon>
    </lineage>
</organism>
<accession>Q99J39</accession>
<accession>Q7TNL6</accession>
<evidence type="ECO:0000250" key="1"/>
<evidence type="ECO:0000250" key="2">
    <source>
        <dbReference type="UniProtKB" id="O95822"/>
    </source>
</evidence>
<evidence type="ECO:0000250" key="3">
    <source>
        <dbReference type="UniProtKB" id="Q920F5"/>
    </source>
</evidence>
<evidence type="ECO:0000255" key="4"/>
<evidence type="ECO:0000256" key="5">
    <source>
        <dbReference type="SAM" id="MobiDB-lite"/>
    </source>
</evidence>
<evidence type="ECO:0000269" key="6">
    <source>
    </source>
</evidence>
<evidence type="ECO:0000269" key="7">
    <source>
    </source>
</evidence>
<evidence type="ECO:0000305" key="8"/>
<evidence type="ECO:0000312" key="9">
    <source>
        <dbReference type="MGI" id="MGI:1928485"/>
    </source>
</evidence>
<evidence type="ECO:0007744" key="10">
    <source>
    </source>
</evidence>
<evidence type="ECO:0007744" key="11">
    <source>
    </source>
</evidence>